<gene>
    <name evidence="1" type="primary">purA</name>
    <name type="ordered locus">BC_5468</name>
</gene>
<sequence length="429" mass="47569">MSSVVVVGTQWGDEGKGKITDFLSEHAEVVARYQGGNNAGHTIVFGGVKYKLHLIPSGIFYKEKICVIGNGLVVDPKALLEELKYLHDRGVSTDNLRVSNRAHVILPYHLKQDELEEASKGDNKIGTTKKGIGPAYMDKAARIGIRMADLLDREAFKEKLERNLVEKNRLFEKMYDTEGFTVEEIFEEYFEYGQQIAQYVCDTSVVLNDALDNNHRVLFEGAQGVMLDIDHGTYPFVTSSNPIAGGVTVGTGVGPAKVTRVVGVCKAYTSRVGDGPFPTELHDEIGHQIREVGREYGTTTGRPRRVGWFDSVVVRHARRVSGLTDLSLNSIDVLTGIPTLKICVAYKYNGEVIDEVPANLNILAKCEPVYEELPGWEEDITGVKSLDELPENARKYVERVSELTGIQISMFSVGPDRNQTNIVRNVYEA</sequence>
<name>PURA_BACCR</name>
<organism>
    <name type="scientific">Bacillus cereus (strain ATCC 14579 / DSM 31 / CCUG 7414 / JCM 2152 / NBRC 15305 / NCIMB 9373 / NCTC 2599 / NRRL B-3711)</name>
    <dbReference type="NCBI Taxonomy" id="226900"/>
    <lineage>
        <taxon>Bacteria</taxon>
        <taxon>Bacillati</taxon>
        <taxon>Bacillota</taxon>
        <taxon>Bacilli</taxon>
        <taxon>Bacillales</taxon>
        <taxon>Bacillaceae</taxon>
        <taxon>Bacillus</taxon>
        <taxon>Bacillus cereus group</taxon>
    </lineage>
</organism>
<protein>
    <recommendedName>
        <fullName evidence="1">Adenylosuccinate synthetase</fullName>
        <shortName evidence="1">AMPSase</shortName>
        <shortName evidence="1">AdSS</shortName>
        <ecNumber evidence="1">6.3.4.4</ecNumber>
    </recommendedName>
    <alternativeName>
        <fullName evidence="1">IMP--aspartate ligase</fullName>
    </alternativeName>
</protein>
<evidence type="ECO:0000255" key="1">
    <source>
        <dbReference type="HAMAP-Rule" id="MF_00011"/>
    </source>
</evidence>
<comment type="function">
    <text evidence="1">Plays an important role in the de novo pathway of purine nucleotide biosynthesis. Catalyzes the first committed step in the biosynthesis of AMP from IMP.</text>
</comment>
<comment type="catalytic activity">
    <reaction evidence="1">
        <text>IMP + L-aspartate + GTP = N(6)-(1,2-dicarboxyethyl)-AMP + GDP + phosphate + 2 H(+)</text>
        <dbReference type="Rhea" id="RHEA:15753"/>
        <dbReference type="ChEBI" id="CHEBI:15378"/>
        <dbReference type="ChEBI" id="CHEBI:29991"/>
        <dbReference type="ChEBI" id="CHEBI:37565"/>
        <dbReference type="ChEBI" id="CHEBI:43474"/>
        <dbReference type="ChEBI" id="CHEBI:57567"/>
        <dbReference type="ChEBI" id="CHEBI:58053"/>
        <dbReference type="ChEBI" id="CHEBI:58189"/>
        <dbReference type="EC" id="6.3.4.4"/>
    </reaction>
</comment>
<comment type="cofactor">
    <cofactor evidence="1">
        <name>Mg(2+)</name>
        <dbReference type="ChEBI" id="CHEBI:18420"/>
    </cofactor>
    <text evidence="1">Binds 1 Mg(2+) ion per subunit.</text>
</comment>
<comment type="pathway">
    <text evidence="1">Purine metabolism; AMP biosynthesis via de novo pathway; AMP from IMP: step 1/2.</text>
</comment>
<comment type="subunit">
    <text evidence="1">Homodimer.</text>
</comment>
<comment type="subcellular location">
    <subcellularLocation>
        <location evidence="1">Cytoplasm</location>
    </subcellularLocation>
</comment>
<comment type="similarity">
    <text evidence="1">Belongs to the adenylosuccinate synthetase family.</text>
</comment>
<reference key="1">
    <citation type="journal article" date="2003" name="Nature">
        <title>Genome sequence of Bacillus cereus and comparative analysis with Bacillus anthracis.</title>
        <authorList>
            <person name="Ivanova N."/>
            <person name="Sorokin A."/>
            <person name="Anderson I."/>
            <person name="Galleron N."/>
            <person name="Candelon B."/>
            <person name="Kapatral V."/>
            <person name="Bhattacharyya A."/>
            <person name="Reznik G."/>
            <person name="Mikhailova N."/>
            <person name="Lapidus A."/>
            <person name="Chu L."/>
            <person name="Mazur M."/>
            <person name="Goltsman E."/>
            <person name="Larsen N."/>
            <person name="D'Souza M."/>
            <person name="Walunas T."/>
            <person name="Grechkin Y."/>
            <person name="Pusch G."/>
            <person name="Haselkorn R."/>
            <person name="Fonstein M."/>
            <person name="Ehrlich S.D."/>
            <person name="Overbeek R."/>
            <person name="Kyrpides N.C."/>
        </authorList>
    </citation>
    <scope>NUCLEOTIDE SEQUENCE [LARGE SCALE GENOMIC DNA]</scope>
    <source>
        <strain>ATCC 14579 / DSM 31 / CCUG 7414 / JCM 2152 / NBRC 15305 / NCIMB 9373 / NCTC 2599 / NRRL B-3711</strain>
    </source>
</reference>
<feature type="chain" id="PRO_0000095144" description="Adenylosuccinate synthetase">
    <location>
        <begin position="1"/>
        <end position="429"/>
    </location>
</feature>
<feature type="active site" description="Proton acceptor" evidence="1">
    <location>
        <position position="13"/>
    </location>
</feature>
<feature type="active site" description="Proton donor" evidence="1">
    <location>
        <position position="41"/>
    </location>
</feature>
<feature type="binding site" evidence="1">
    <location>
        <begin position="12"/>
        <end position="18"/>
    </location>
    <ligand>
        <name>GTP</name>
        <dbReference type="ChEBI" id="CHEBI:37565"/>
    </ligand>
</feature>
<feature type="binding site" description="in other chain" evidence="1">
    <location>
        <begin position="13"/>
        <end position="16"/>
    </location>
    <ligand>
        <name>IMP</name>
        <dbReference type="ChEBI" id="CHEBI:58053"/>
        <note>ligand shared between dimeric partners</note>
    </ligand>
</feature>
<feature type="binding site" evidence="1">
    <location>
        <position position="13"/>
    </location>
    <ligand>
        <name>Mg(2+)</name>
        <dbReference type="ChEBI" id="CHEBI:18420"/>
    </ligand>
</feature>
<feature type="binding site" description="in other chain" evidence="1">
    <location>
        <begin position="38"/>
        <end position="41"/>
    </location>
    <ligand>
        <name>IMP</name>
        <dbReference type="ChEBI" id="CHEBI:58053"/>
        <note>ligand shared between dimeric partners</note>
    </ligand>
</feature>
<feature type="binding site" evidence="1">
    <location>
        <begin position="40"/>
        <end position="42"/>
    </location>
    <ligand>
        <name>GTP</name>
        <dbReference type="ChEBI" id="CHEBI:37565"/>
    </ligand>
</feature>
<feature type="binding site" evidence="1">
    <location>
        <position position="40"/>
    </location>
    <ligand>
        <name>Mg(2+)</name>
        <dbReference type="ChEBI" id="CHEBI:18420"/>
    </ligand>
</feature>
<feature type="binding site" description="in other chain" evidence="1">
    <location>
        <position position="128"/>
    </location>
    <ligand>
        <name>IMP</name>
        <dbReference type="ChEBI" id="CHEBI:58053"/>
        <note>ligand shared between dimeric partners</note>
    </ligand>
</feature>
<feature type="binding site" evidence="1">
    <location>
        <position position="142"/>
    </location>
    <ligand>
        <name>IMP</name>
        <dbReference type="ChEBI" id="CHEBI:58053"/>
        <note>ligand shared between dimeric partners</note>
    </ligand>
</feature>
<feature type="binding site" description="in other chain" evidence="1">
    <location>
        <position position="223"/>
    </location>
    <ligand>
        <name>IMP</name>
        <dbReference type="ChEBI" id="CHEBI:58053"/>
        <note>ligand shared between dimeric partners</note>
    </ligand>
</feature>
<feature type="binding site" description="in other chain" evidence="1">
    <location>
        <position position="238"/>
    </location>
    <ligand>
        <name>IMP</name>
        <dbReference type="ChEBI" id="CHEBI:58053"/>
        <note>ligand shared between dimeric partners</note>
    </ligand>
</feature>
<feature type="binding site" evidence="1">
    <location>
        <begin position="298"/>
        <end position="304"/>
    </location>
    <ligand>
        <name>substrate</name>
    </ligand>
</feature>
<feature type="binding site" description="in other chain" evidence="1">
    <location>
        <position position="302"/>
    </location>
    <ligand>
        <name>IMP</name>
        <dbReference type="ChEBI" id="CHEBI:58053"/>
        <note>ligand shared between dimeric partners</note>
    </ligand>
</feature>
<feature type="binding site" evidence="1">
    <location>
        <position position="304"/>
    </location>
    <ligand>
        <name>GTP</name>
        <dbReference type="ChEBI" id="CHEBI:37565"/>
    </ligand>
</feature>
<feature type="binding site" evidence="1">
    <location>
        <begin position="330"/>
        <end position="332"/>
    </location>
    <ligand>
        <name>GTP</name>
        <dbReference type="ChEBI" id="CHEBI:37565"/>
    </ligand>
</feature>
<feature type="binding site" evidence="1">
    <location>
        <begin position="412"/>
        <end position="414"/>
    </location>
    <ligand>
        <name>GTP</name>
        <dbReference type="ChEBI" id="CHEBI:37565"/>
    </ligand>
</feature>
<accession>Q814H1</accession>
<keyword id="KW-0963">Cytoplasm</keyword>
<keyword id="KW-0342">GTP-binding</keyword>
<keyword id="KW-0436">Ligase</keyword>
<keyword id="KW-0460">Magnesium</keyword>
<keyword id="KW-0479">Metal-binding</keyword>
<keyword id="KW-0547">Nucleotide-binding</keyword>
<keyword id="KW-0658">Purine biosynthesis</keyword>
<keyword id="KW-1185">Reference proteome</keyword>
<dbReference type="EC" id="6.3.4.4" evidence="1"/>
<dbReference type="EMBL" id="AE016877">
    <property type="protein sequence ID" value="AAP12324.1"/>
    <property type="molecule type" value="Genomic_DNA"/>
</dbReference>
<dbReference type="RefSeq" id="NP_835123.1">
    <property type="nucleotide sequence ID" value="NC_004722.1"/>
</dbReference>
<dbReference type="RefSeq" id="WP_000100238.1">
    <property type="nucleotide sequence ID" value="NZ_CP138336.1"/>
</dbReference>
<dbReference type="SMR" id="Q814H1"/>
<dbReference type="STRING" id="226900.BC_5468"/>
<dbReference type="KEGG" id="bce:BC5468"/>
<dbReference type="PATRIC" id="fig|226900.8.peg.5646"/>
<dbReference type="HOGENOM" id="CLU_029848_0_0_9"/>
<dbReference type="OrthoDB" id="9807553at2"/>
<dbReference type="UniPathway" id="UPA00075">
    <property type="reaction ID" value="UER00335"/>
</dbReference>
<dbReference type="Proteomes" id="UP000001417">
    <property type="component" value="Chromosome"/>
</dbReference>
<dbReference type="GO" id="GO:0005737">
    <property type="term" value="C:cytoplasm"/>
    <property type="evidence" value="ECO:0000318"/>
    <property type="project" value="GO_Central"/>
</dbReference>
<dbReference type="GO" id="GO:0004019">
    <property type="term" value="F:adenylosuccinate synthase activity"/>
    <property type="evidence" value="ECO:0000318"/>
    <property type="project" value="GO_Central"/>
</dbReference>
<dbReference type="GO" id="GO:0005525">
    <property type="term" value="F:GTP binding"/>
    <property type="evidence" value="ECO:0007669"/>
    <property type="project" value="UniProtKB-UniRule"/>
</dbReference>
<dbReference type="GO" id="GO:0000287">
    <property type="term" value="F:magnesium ion binding"/>
    <property type="evidence" value="ECO:0007669"/>
    <property type="project" value="UniProtKB-UniRule"/>
</dbReference>
<dbReference type="GO" id="GO:0044208">
    <property type="term" value="P:'de novo' AMP biosynthetic process"/>
    <property type="evidence" value="ECO:0000318"/>
    <property type="project" value="GO_Central"/>
</dbReference>
<dbReference type="GO" id="GO:0046040">
    <property type="term" value="P:IMP metabolic process"/>
    <property type="evidence" value="ECO:0000318"/>
    <property type="project" value="GO_Central"/>
</dbReference>
<dbReference type="CDD" id="cd03108">
    <property type="entry name" value="AdSS"/>
    <property type="match status" value="1"/>
</dbReference>
<dbReference type="FunFam" id="1.10.300.10:FF:000001">
    <property type="entry name" value="Adenylosuccinate synthetase"/>
    <property type="match status" value="1"/>
</dbReference>
<dbReference type="FunFam" id="3.90.170.10:FF:000001">
    <property type="entry name" value="Adenylosuccinate synthetase"/>
    <property type="match status" value="1"/>
</dbReference>
<dbReference type="Gene3D" id="3.40.440.10">
    <property type="entry name" value="Adenylosuccinate Synthetase, subunit A, domain 1"/>
    <property type="match status" value="1"/>
</dbReference>
<dbReference type="Gene3D" id="1.10.300.10">
    <property type="entry name" value="Adenylosuccinate Synthetase, subunit A, domain 2"/>
    <property type="match status" value="1"/>
</dbReference>
<dbReference type="Gene3D" id="3.90.170.10">
    <property type="entry name" value="Adenylosuccinate Synthetase, subunit A, domain 3"/>
    <property type="match status" value="1"/>
</dbReference>
<dbReference type="HAMAP" id="MF_00011">
    <property type="entry name" value="Adenylosucc_synth"/>
    <property type="match status" value="1"/>
</dbReference>
<dbReference type="InterPro" id="IPR018220">
    <property type="entry name" value="Adenylosuccin_syn_GTP-bd"/>
</dbReference>
<dbReference type="InterPro" id="IPR033128">
    <property type="entry name" value="Adenylosuccin_syn_Lys_AS"/>
</dbReference>
<dbReference type="InterPro" id="IPR042109">
    <property type="entry name" value="Adenylosuccinate_synth_dom1"/>
</dbReference>
<dbReference type="InterPro" id="IPR042110">
    <property type="entry name" value="Adenylosuccinate_synth_dom2"/>
</dbReference>
<dbReference type="InterPro" id="IPR042111">
    <property type="entry name" value="Adenylosuccinate_synth_dom3"/>
</dbReference>
<dbReference type="InterPro" id="IPR001114">
    <property type="entry name" value="Adenylosuccinate_synthetase"/>
</dbReference>
<dbReference type="InterPro" id="IPR027417">
    <property type="entry name" value="P-loop_NTPase"/>
</dbReference>
<dbReference type="NCBIfam" id="NF002223">
    <property type="entry name" value="PRK01117.1"/>
    <property type="match status" value="1"/>
</dbReference>
<dbReference type="NCBIfam" id="TIGR00184">
    <property type="entry name" value="purA"/>
    <property type="match status" value="1"/>
</dbReference>
<dbReference type="PANTHER" id="PTHR11846">
    <property type="entry name" value="ADENYLOSUCCINATE SYNTHETASE"/>
    <property type="match status" value="1"/>
</dbReference>
<dbReference type="PANTHER" id="PTHR11846:SF0">
    <property type="entry name" value="ADENYLOSUCCINATE SYNTHETASE"/>
    <property type="match status" value="1"/>
</dbReference>
<dbReference type="Pfam" id="PF00709">
    <property type="entry name" value="Adenylsucc_synt"/>
    <property type="match status" value="1"/>
</dbReference>
<dbReference type="SMART" id="SM00788">
    <property type="entry name" value="Adenylsucc_synt"/>
    <property type="match status" value="1"/>
</dbReference>
<dbReference type="SUPFAM" id="SSF52540">
    <property type="entry name" value="P-loop containing nucleoside triphosphate hydrolases"/>
    <property type="match status" value="1"/>
</dbReference>
<dbReference type="PROSITE" id="PS01266">
    <property type="entry name" value="ADENYLOSUCCIN_SYN_1"/>
    <property type="match status" value="1"/>
</dbReference>
<dbReference type="PROSITE" id="PS00513">
    <property type="entry name" value="ADENYLOSUCCIN_SYN_2"/>
    <property type="match status" value="1"/>
</dbReference>
<proteinExistence type="inferred from homology"/>